<evidence type="ECO:0000250" key="1">
    <source>
        <dbReference type="UniProtKB" id="P94692"/>
    </source>
</evidence>
<evidence type="ECO:0000256" key="2">
    <source>
        <dbReference type="SAM" id="MobiDB-lite"/>
    </source>
</evidence>
<evidence type="ECO:0000269" key="3">
    <source>
    </source>
</evidence>
<protein>
    <recommendedName>
        <fullName>Pyruvate synthase subunit PorB</fullName>
        <ecNumber>1.2.7.1</ecNumber>
    </recommendedName>
    <alternativeName>
        <fullName>Pyruvate oxidoreductase beta chain</fullName>
        <shortName>POR</shortName>
    </alternativeName>
    <alternativeName>
        <fullName>Pyruvic-ferredoxin oxidoreductase subunit beta</fullName>
    </alternativeName>
</protein>
<keyword id="KW-0004">4Fe-4S</keyword>
<keyword id="KW-0903">Direct protein sequencing</keyword>
<keyword id="KW-0408">Iron</keyword>
<keyword id="KW-0411">Iron-sulfur</keyword>
<keyword id="KW-0479">Metal-binding</keyword>
<keyword id="KW-0560">Oxidoreductase</keyword>
<comment type="catalytic activity">
    <reaction>
        <text>2 oxidized [2Fe-2S]-[ferredoxin] + pyruvate + CoA = 2 reduced [2Fe-2S]-[ferredoxin] + acetyl-CoA + CO2 + H(+)</text>
        <dbReference type="Rhea" id="RHEA:12765"/>
        <dbReference type="Rhea" id="RHEA-COMP:10000"/>
        <dbReference type="Rhea" id="RHEA-COMP:10001"/>
        <dbReference type="ChEBI" id="CHEBI:15361"/>
        <dbReference type="ChEBI" id="CHEBI:15378"/>
        <dbReference type="ChEBI" id="CHEBI:16526"/>
        <dbReference type="ChEBI" id="CHEBI:33737"/>
        <dbReference type="ChEBI" id="CHEBI:33738"/>
        <dbReference type="ChEBI" id="CHEBI:57287"/>
        <dbReference type="ChEBI" id="CHEBI:57288"/>
        <dbReference type="EC" id="1.2.7.1"/>
    </reaction>
</comment>
<comment type="cofactor">
    <cofactor evidence="1">
        <name>[4Fe-4S] cluster</name>
        <dbReference type="ChEBI" id="CHEBI:49883"/>
    </cofactor>
    <text evidence="1">Binds 1 [4Fe-4S] cluster per subunit.</text>
</comment>
<comment type="subunit">
    <text>Heterotetramer of one alpha, one beta, one delta and one gamma chain.</text>
</comment>
<comment type="miscellaneous">
    <text>It also catalyzes the oxidation of 2-oxobutyrate.</text>
</comment>
<gene>
    <name type="primary">porB</name>
    <name type="ordered locus">Mbar_A0999</name>
</gene>
<dbReference type="EC" id="1.2.7.1"/>
<dbReference type="EMBL" id="CP000099">
    <property type="protein sequence ID" value="AAZ69967.1"/>
    <property type="molecule type" value="Genomic_DNA"/>
</dbReference>
<dbReference type="PIR" id="S65417">
    <property type="entry name" value="S65417"/>
</dbReference>
<dbReference type="SMR" id="P80522"/>
<dbReference type="STRING" id="269797.Mbar_A0999"/>
<dbReference type="PaxDb" id="269797-Mbar_A0999"/>
<dbReference type="KEGG" id="mba:Mbar_A0999"/>
<dbReference type="eggNOG" id="arCOG01601">
    <property type="taxonomic scope" value="Archaea"/>
</dbReference>
<dbReference type="HOGENOM" id="CLU_058423_0_0_2"/>
<dbReference type="OrthoDB" id="296931at2157"/>
<dbReference type="BRENDA" id="1.2.7.1">
    <property type="organism ID" value="3250"/>
</dbReference>
<dbReference type="GO" id="GO:0051539">
    <property type="term" value="F:4 iron, 4 sulfur cluster binding"/>
    <property type="evidence" value="ECO:0007669"/>
    <property type="project" value="UniProtKB-KW"/>
</dbReference>
<dbReference type="GO" id="GO:0046872">
    <property type="term" value="F:metal ion binding"/>
    <property type="evidence" value="ECO:0007669"/>
    <property type="project" value="UniProtKB-KW"/>
</dbReference>
<dbReference type="GO" id="GO:0019164">
    <property type="term" value="F:pyruvate synthase activity"/>
    <property type="evidence" value="ECO:0007669"/>
    <property type="project" value="UniProtKB-EC"/>
</dbReference>
<dbReference type="GO" id="GO:0030976">
    <property type="term" value="F:thiamine pyrophosphate binding"/>
    <property type="evidence" value="ECO:0007669"/>
    <property type="project" value="InterPro"/>
</dbReference>
<dbReference type="CDD" id="cd03376">
    <property type="entry name" value="TPP_PFOR_porB_like"/>
    <property type="match status" value="1"/>
</dbReference>
<dbReference type="Gene3D" id="3.40.50.970">
    <property type="match status" value="2"/>
</dbReference>
<dbReference type="InterPro" id="IPR051479">
    <property type="entry name" value="PorB-like"/>
</dbReference>
<dbReference type="InterPro" id="IPR029061">
    <property type="entry name" value="THDP-binding"/>
</dbReference>
<dbReference type="InterPro" id="IPR011766">
    <property type="entry name" value="TPP_enzyme_TPP-bd"/>
</dbReference>
<dbReference type="NCBIfam" id="NF008819">
    <property type="entry name" value="PRK11865.1"/>
    <property type="match status" value="1"/>
</dbReference>
<dbReference type="PANTHER" id="PTHR42897">
    <property type="entry name" value="PYRUVATE SYNTHASE SUBUNIT PORB"/>
    <property type="match status" value="1"/>
</dbReference>
<dbReference type="PANTHER" id="PTHR42897:SF2">
    <property type="entry name" value="PYRUVATE SYNTHASE SUBUNIT PORB"/>
    <property type="match status" value="1"/>
</dbReference>
<dbReference type="Pfam" id="PF02775">
    <property type="entry name" value="TPP_enzyme_C"/>
    <property type="match status" value="1"/>
</dbReference>
<dbReference type="SUPFAM" id="SSF52518">
    <property type="entry name" value="Thiamin diphosphate-binding fold (THDP-binding)"/>
    <property type="match status" value="1"/>
</dbReference>
<reference key="1">
    <citation type="journal article" date="2006" name="J. Bacteriol.">
        <title>The Methanosarcina barkeri genome: comparative analysis with Methanosarcina acetivorans and Methanosarcina mazei reveals extensive rearrangement within methanosarcinal genomes.</title>
        <authorList>
            <person name="Maeder D.L."/>
            <person name="Anderson I."/>
            <person name="Brettin T.S."/>
            <person name="Bruce D.C."/>
            <person name="Gilna P."/>
            <person name="Han C.S."/>
            <person name="Lapidus A."/>
            <person name="Metcalf W.W."/>
            <person name="Saunders E."/>
            <person name="Tapia R."/>
            <person name="Sowers K.R."/>
        </authorList>
    </citation>
    <scope>NUCLEOTIDE SEQUENCE [LARGE SCALE GENOMIC DNA]</scope>
    <source>
        <strain>Fusaro / DSM 804</strain>
    </source>
</reference>
<reference key="2">
    <citation type="journal article" date="1996" name="Eur. J. Biochem.">
        <title>Catalytic properties, molecular composition and sequence alignments of pyruvate: ferredoxin oxidoreductase from the methanogenic archaeon Methanosarcina barkeri (strain Fusaro).</title>
        <authorList>
            <person name="Bock A.-K."/>
            <person name="Kunow J."/>
            <person name="Glasemacher J."/>
            <person name="Schoenheit P."/>
        </authorList>
    </citation>
    <scope>PROTEIN SEQUENCE OF 2-35</scope>
</reference>
<accession>P80522</accession>
<accession>Q46DS5</accession>
<organism>
    <name type="scientific">Methanosarcina barkeri (strain Fusaro / DSM 804)</name>
    <dbReference type="NCBI Taxonomy" id="269797"/>
    <lineage>
        <taxon>Archaea</taxon>
        <taxon>Methanobacteriati</taxon>
        <taxon>Methanobacteriota</taxon>
        <taxon>Stenosarchaea group</taxon>
        <taxon>Methanomicrobia</taxon>
        <taxon>Methanosarcinales</taxon>
        <taxon>Methanosarcinaceae</taxon>
        <taxon>Methanosarcina</taxon>
    </lineage>
</organism>
<proteinExistence type="evidence at protein level"/>
<feature type="initiator methionine" description="Removed" evidence="3">
    <location>
        <position position="1"/>
    </location>
</feature>
<feature type="chain" id="PRO_0000097126" description="Pyruvate synthase subunit PorB">
    <location>
        <begin position="2"/>
        <end position="296"/>
    </location>
</feature>
<feature type="region of interest" description="Disordered" evidence="2">
    <location>
        <begin position="140"/>
        <end position="159"/>
    </location>
</feature>
<feature type="compositionally biased region" description="Polar residues" evidence="2">
    <location>
        <begin position="140"/>
        <end position="150"/>
    </location>
</feature>
<feature type="binding site" evidence="1">
    <location>
        <position position="17"/>
    </location>
    <ligand>
        <name>[4Fe-4S] cluster</name>
        <dbReference type="ChEBI" id="CHEBI:49883"/>
    </ligand>
</feature>
<feature type="binding site" evidence="1">
    <location>
        <position position="20"/>
    </location>
    <ligand>
        <name>[4Fe-4S] cluster</name>
        <dbReference type="ChEBI" id="CHEBI:49883"/>
    </ligand>
</feature>
<feature type="binding site" evidence="1">
    <location>
        <position position="45"/>
    </location>
    <ligand>
        <name>[4Fe-4S] cluster</name>
        <dbReference type="ChEBI" id="CHEBI:49883"/>
    </ligand>
</feature>
<feature type="binding site" evidence="1">
    <location>
        <position position="210"/>
    </location>
    <ligand>
        <name>[4Fe-4S] cluster</name>
        <dbReference type="ChEBI" id="CHEBI:49883"/>
    </ligand>
</feature>
<name>PORB_METBF</name>
<sequence>MSKTAPKTYITSGHSGCAGCCDAFAAKFTLMGAGPNTIVINPTGCLEVMSTPFPYSSWQVPWIHSLFENAGAVASGVEAALKALGKKDDVKVVSIGGDGSTMDIGLGALSGAFERGHDFTYVCMDNEAYMNTGVQRSSGTPFDASTTTTPAGKVSFGNPRPKKNMPAIMAAHGSPYVATTSIGFPRDMIRKVKKATEIVGPTYIHAQAPCPTGWGFDTSKTLEIAKLAVETCLWPMYEMENGEITQVRKVKNPRPVEEYLRAQKRFKHLFTMEGGEEEIKKIQAIADWNIKHFELQ</sequence>